<feature type="chain" id="PRO_0000193355" description="Ubiquinone/menaquinone biosynthesis C-methyltransferase UbiE">
    <location>
        <begin position="1"/>
        <end position="253"/>
    </location>
</feature>
<feature type="binding site" evidence="1">
    <location>
        <position position="76"/>
    </location>
    <ligand>
        <name>S-adenosyl-L-methionine</name>
        <dbReference type="ChEBI" id="CHEBI:59789"/>
    </ligand>
</feature>
<feature type="binding site" evidence="1">
    <location>
        <position position="97"/>
    </location>
    <ligand>
        <name>S-adenosyl-L-methionine</name>
        <dbReference type="ChEBI" id="CHEBI:59789"/>
    </ligand>
</feature>
<feature type="binding site" evidence="1">
    <location>
        <begin position="125"/>
        <end position="126"/>
    </location>
    <ligand>
        <name>S-adenosyl-L-methionine</name>
        <dbReference type="ChEBI" id="CHEBI:59789"/>
    </ligand>
</feature>
<feature type="binding site" evidence="1">
    <location>
        <position position="142"/>
    </location>
    <ligand>
        <name>S-adenosyl-L-methionine</name>
        <dbReference type="ChEBI" id="CHEBI:59789"/>
    </ligand>
</feature>
<protein>
    <recommendedName>
        <fullName evidence="1">Ubiquinone/menaquinone biosynthesis C-methyltransferase UbiE</fullName>
        <ecNumber evidence="1">2.1.1.163</ecNumber>
        <ecNumber evidence="1">2.1.1.201</ecNumber>
    </recommendedName>
    <alternativeName>
        <fullName evidence="1">2-methoxy-6-polyprenyl-1,4-benzoquinol methylase</fullName>
    </alternativeName>
    <alternativeName>
        <fullName evidence="1">Demethylmenaquinone methyltransferase</fullName>
    </alternativeName>
</protein>
<reference key="1">
    <citation type="journal article" date="2000" name="Nature">
        <title>The genome sequence of the plant pathogen Xylella fastidiosa.</title>
        <authorList>
            <person name="Simpson A.J.G."/>
            <person name="Reinach F.C."/>
            <person name="Arruda P."/>
            <person name="Abreu F.A."/>
            <person name="Acencio M."/>
            <person name="Alvarenga R."/>
            <person name="Alves L.M.C."/>
            <person name="Araya J.E."/>
            <person name="Baia G.S."/>
            <person name="Baptista C.S."/>
            <person name="Barros M.H."/>
            <person name="Bonaccorsi E.D."/>
            <person name="Bordin S."/>
            <person name="Bove J.M."/>
            <person name="Briones M.R.S."/>
            <person name="Bueno M.R.P."/>
            <person name="Camargo A.A."/>
            <person name="Camargo L.E.A."/>
            <person name="Carraro D.M."/>
            <person name="Carrer H."/>
            <person name="Colauto N.B."/>
            <person name="Colombo C."/>
            <person name="Costa F.F."/>
            <person name="Costa M.C.R."/>
            <person name="Costa-Neto C.M."/>
            <person name="Coutinho L.L."/>
            <person name="Cristofani M."/>
            <person name="Dias-Neto E."/>
            <person name="Docena C."/>
            <person name="El-Dorry H."/>
            <person name="Facincani A.P."/>
            <person name="Ferreira A.J.S."/>
            <person name="Ferreira V.C.A."/>
            <person name="Ferro J.A."/>
            <person name="Fraga J.S."/>
            <person name="Franca S.C."/>
            <person name="Franco M.C."/>
            <person name="Frohme M."/>
            <person name="Furlan L.R."/>
            <person name="Garnier M."/>
            <person name="Goldman G.H."/>
            <person name="Goldman M.H.S."/>
            <person name="Gomes S.L."/>
            <person name="Gruber A."/>
            <person name="Ho P.L."/>
            <person name="Hoheisel J.D."/>
            <person name="Junqueira M.L."/>
            <person name="Kemper E.L."/>
            <person name="Kitajima J.P."/>
            <person name="Krieger J.E."/>
            <person name="Kuramae E.E."/>
            <person name="Laigret F."/>
            <person name="Lambais M.R."/>
            <person name="Leite L.C.C."/>
            <person name="Lemos E.G.M."/>
            <person name="Lemos M.V.F."/>
            <person name="Lopes S.A."/>
            <person name="Lopes C.R."/>
            <person name="Machado J.A."/>
            <person name="Machado M.A."/>
            <person name="Madeira A.M.B.N."/>
            <person name="Madeira H.M.F."/>
            <person name="Marino C.L."/>
            <person name="Marques M.V."/>
            <person name="Martins E.A.L."/>
            <person name="Martins E.M.F."/>
            <person name="Matsukuma A.Y."/>
            <person name="Menck C.F.M."/>
            <person name="Miracca E.C."/>
            <person name="Miyaki C.Y."/>
            <person name="Monteiro-Vitorello C.B."/>
            <person name="Moon D.H."/>
            <person name="Nagai M.A."/>
            <person name="Nascimento A.L.T.O."/>
            <person name="Netto L.E.S."/>
            <person name="Nhani A. Jr."/>
            <person name="Nobrega F.G."/>
            <person name="Nunes L.R."/>
            <person name="Oliveira M.A."/>
            <person name="de Oliveira M.C."/>
            <person name="de Oliveira R.C."/>
            <person name="Palmieri D.A."/>
            <person name="Paris A."/>
            <person name="Peixoto B.R."/>
            <person name="Pereira G.A.G."/>
            <person name="Pereira H.A. Jr."/>
            <person name="Pesquero J.B."/>
            <person name="Quaggio R.B."/>
            <person name="Roberto P.G."/>
            <person name="Rodrigues V."/>
            <person name="de Rosa A.J.M."/>
            <person name="de Rosa V.E. Jr."/>
            <person name="de Sa R.G."/>
            <person name="Santelli R.V."/>
            <person name="Sawasaki H.E."/>
            <person name="da Silva A.C.R."/>
            <person name="da Silva A.M."/>
            <person name="da Silva F.R."/>
            <person name="Silva W.A. Jr."/>
            <person name="da Silveira J.F."/>
            <person name="Silvestri M.L.Z."/>
            <person name="Siqueira W.J."/>
            <person name="de Souza A.A."/>
            <person name="de Souza A.P."/>
            <person name="Terenzi M.F."/>
            <person name="Truffi D."/>
            <person name="Tsai S.M."/>
            <person name="Tsuhako M.H."/>
            <person name="Vallada H."/>
            <person name="Van Sluys M.A."/>
            <person name="Verjovski-Almeida S."/>
            <person name="Vettore A.L."/>
            <person name="Zago M.A."/>
            <person name="Zatz M."/>
            <person name="Meidanis J."/>
            <person name="Setubal J.C."/>
        </authorList>
    </citation>
    <scope>NUCLEOTIDE SEQUENCE [LARGE SCALE GENOMIC DNA]</scope>
    <source>
        <strain>9a5c</strain>
    </source>
</reference>
<keyword id="KW-0474">Menaquinone biosynthesis</keyword>
<keyword id="KW-0489">Methyltransferase</keyword>
<keyword id="KW-0949">S-adenosyl-L-methionine</keyword>
<keyword id="KW-0808">Transferase</keyword>
<keyword id="KW-0831">Ubiquinone biosynthesis</keyword>
<evidence type="ECO:0000255" key="1">
    <source>
        <dbReference type="HAMAP-Rule" id="MF_01813"/>
    </source>
</evidence>
<dbReference type="EC" id="2.1.1.163" evidence="1"/>
<dbReference type="EC" id="2.1.1.201" evidence="1"/>
<dbReference type="EMBL" id="AE003849">
    <property type="protein sequence ID" value="AAF84296.1"/>
    <property type="molecule type" value="Genomic_DNA"/>
</dbReference>
<dbReference type="PIR" id="C82675">
    <property type="entry name" value="C82675"/>
</dbReference>
<dbReference type="RefSeq" id="WP_010893988.1">
    <property type="nucleotide sequence ID" value="NC_002488.3"/>
</dbReference>
<dbReference type="SMR" id="Q9PD92"/>
<dbReference type="STRING" id="160492.XF_1487"/>
<dbReference type="DNASU" id="1127033"/>
<dbReference type="KEGG" id="xfa:XF_1487"/>
<dbReference type="eggNOG" id="COG2226">
    <property type="taxonomic scope" value="Bacteria"/>
</dbReference>
<dbReference type="HOGENOM" id="CLU_037990_0_0_6"/>
<dbReference type="UniPathway" id="UPA00079">
    <property type="reaction ID" value="UER00169"/>
</dbReference>
<dbReference type="UniPathway" id="UPA00232"/>
<dbReference type="Proteomes" id="UP000000812">
    <property type="component" value="Chromosome"/>
</dbReference>
<dbReference type="GO" id="GO:0008425">
    <property type="term" value="F:2-methoxy-6-polyprenyl-1,4-benzoquinol methyltransferase activity"/>
    <property type="evidence" value="ECO:0007669"/>
    <property type="project" value="UniProtKB-UniRule"/>
</dbReference>
<dbReference type="GO" id="GO:0043770">
    <property type="term" value="F:demethylmenaquinone methyltransferase activity"/>
    <property type="evidence" value="ECO:0007669"/>
    <property type="project" value="UniProtKB-UniRule"/>
</dbReference>
<dbReference type="GO" id="GO:0009060">
    <property type="term" value="P:aerobic respiration"/>
    <property type="evidence" value="ECO:0007669"/>
    <property type="project" value="UniProtKB-UniRule"/>
</dbReference>
<dbReference type="GO" id="GO:0009234">
    <property type="term" value="P:menaquinone biosynthetic process"/>
    <property type="evidence" value="ECO:0007669"/>
    <property type="project" value="UniProtKB-UniRule"/>
</dbReference>
<dbReference type="GO" id="GO:0032259">
    <property type="term" value="P:methylation"/>
    <property type="evidence" value="ECO:0007669"/>
    <property type="project" value="UniProtKB-KW"/>
</dbReference>
<dbReference type="CDD" id="cd02440">
    <property type="entry name" value="AdoMet_MTases"/>
    <property type="match status" value="1"/>
</dbReference>
<dbReference type="Gene3D" id="3.40.50.150">
    <property type="entry name" value="Vaccinia Virus protein VP39"/>
    <property type="match status" value="1"/>
</dbReference>
<dbReference type="HAMAP" id="MF_01813">
    <property type="entry name" value="MenG_UbiE_methyltr"/>
    <property type="match status" value="1"/>
</dbReference>
<dbReference type="InterPro" id="IPR029063">
    <property type="entry name" value="SAM-dependent_MTases_sf"/>
</dbReference>
<dbReference type="InterPro" id="IPR004033">
    <property type="entry name" value="UbiE/COQ5_MeTrFase"/>
</dbReference>
<dbReference type="InterPro" id="IPR023576">
    <property type="entry name" value="UbiE/COQ5_MeTrFase_CS"/>
</dbReference>
<dbReference type="NCBIfam" id="TIGR01934">
    <property type="entry name" value="MenG_MenH_UbiE"/>
    <property type="match status" value="1"/>
</dbReference>
<dbReference type="NCBIfam" id="NF001242">
    <property type="entry name" value="PRK00216.1-3"/>
    <property type="match status" value="1"/>
</dbReference>
<dbReference type="NCBIfam" id="NF001244">
    <property type="entry name" value="PRK00216.1-5"/>
    <property type="match status" value="1"/>
</dbReference>
<dbReference type="PANTHER" id="PTHR43591:SF24">
    <property type="entry name" value="2-METHOXY-6-POLYPRENYL-1,4-BENZOQUINOL METHYLASE, MITOCHONDRIAL"/>
    <property type="match status" value="1"/>
</dbReference>
<dbReference type="PANTHER" id="PTHR43591">
    <property type="entry name" value="METHYLTRANSFERASE"/>
    <property type="match status" value="1"/>
</dbReference>
<dbReference type="Pfam" id="PF01209">
    <property type="entry name" value="Ubie_methyltran"/>
    <property type="match status" value="1"/>
</dbReference>
<dbReference type="SUPFAM" id="SSF53335">
    <property type="entry name" value="S-adenosyl-L-methionine-dependent methyltransferases"/>
    <property type="match status" value="1"/>
</dbReference>
<dbReference type="PROSITE" id="PS51608">
    <property type="entry name" value="SAM_MT_UBIE"/>
    <property type="match status" value="1"/>
</dbReference>
<dbReference type="PROSITE" id="PS01183">
    <property type="entry name" value="UBIE_1"/>
    <property type="match status" value="1"/>
</dbReference>
<dbReference type="PROSITE" id="PS01184">
    <property type="entry name" value="UBIE_2"/>
    <property type="match status" value="1"/>
</dbReference>
<comment type="function">
    <text evidence="1">Methyltransferase required for the conversion of demethylmenaquinol (DMKH2) to menaquinol (MKH2) and the conversion of 2-polyprenyl-6-methoxy-1,4-benzoquinol (DDMQH2) to 2-polyprenyl-3-methyl-6-methoxy-1,4-benzoquinol (DMQH2).</text>
</comment>
<comment type="catalytic activity">
    <reaction evidence="1">
        <text>a 2-demethylmenaquinol + S-adenosyl-L-methionine = a menaquinol + S-adenosyl-L-homocysteine + H(+)</text>
        <dbReference type="Rhea" id="RHEA:42640"/>
        <dbReference type="Rhea" id="RHEA-COMP:9539"/>
        <dbReference type="Rhea" id="RHEA-COMP:9563"/>
        <dbReference type="ChEBI" id="CHEBI:15378"/>
        <dbReference type="ChEBI" id="CHEBI:18151"/>
        <dbReference type="ChEBI" id="CHEBI:55437"/>
        <dbReference type="ChEBI" id="CHEBI:57856"/>
        <dbReference type="ChEBI" id="CHEBI:59789"/>
        <dbReference type="EC" id="2.1.1.163"/>
    </reaction>
</comment>
<comment type="catalytic activity">
    <reaction evidence="1">
        <text>a 2-methoxy-6-(all-trans-polyprenyl)benzene-1,4-diol + S-adenosyl-L-methionine = a 5-methoxy-2-methyl-3-(all-trans-polyprenyl)benzene-1,4-diol + S-adenosyl-L-homocysteine + H(+)</text>
        <dbReference type="Rhea" id="RHEA:28286"/>
        <dbReference type="Rhea" id="RHEA-COMP:10858"/>
        <dbReference type="Rhea" id="RHEA-COMP:10859"/>
        <dbReference type="ChEBI" id="CHEBI:15378"/>
        <dbReference type="ChEBI" id="CHEBI:57856"/>
        <dbReference type="ChEBI" id="CHEBI:59789"/>
        <dbReference type="ChEBI" id="CHEBI:84166"/>
        <dbReference type="ChEBI" id="CHEBI:84167"/>
        <dbReference type="EC" id="2.1.1.201"/>
    </reaction>
</comment>
<comment type="pathway">
    <text evidence="1">Quinol/quinone metabolism; menaquinone biosynthesis; menaquinol from 1,4-dihydroxy-2-naphthoate: step 2/2.</text>
</comment>
<comment type="pathway">
    <text evidence="1">Cofactor biosynthesis; ubiquinone biosynthesis.</text>
</comment>
<comment type="similarity">
    <text evidence="1">Belongs to the class I-like SAM-binding methyltransferase superfamily. MenG/UbiE family.</text>
</comment>
<organism>
    <name type="scientific">Xylella fastidiosa (strain 9a5c)</name>
    <dbReference type="NCBI Taxonomy" id="160492"/>
    <lineage>
        <taxon>Bacteria</taxon>
        <taxon>Pseudomonadati</taxon>
        <taxon>Pseudomonadota</taxon>
        <taxon>Gammaproteobacteria</taxon>
        <taxon>Lysobacterales</taxon>
        <taxon>Lysobacteraceae</taxon>
        <taxon>Xylella</taxon>
    </lineage>
</organism>
<gene>
    <name evidence="1" type="primary">ubiE</name>
    <name type="ordered locus">XF_1487</name>
</gene>
<sequence length="253" mass="28296">MSESSEKTGTTHFGFRQVAAKDKKTLVAEVFTSVSRRYDLMNDLMSLGIHRAWKRYFVATAQVKSGDRVLDLAGGTGDIAMLLKNRVGAEGSIVLGDINASMLSVGRDRLIDRGVVAHLDYVQCNAEALPFQDKCFDLVTMSFGLRNVTDKDTALCEMFRVLKVGGQARVLEFSTVTAEWFKPIYDFHSFQVLPRLGRLFARDAASYRYLAESIRKHPPQEELQAMMGAAGFERCRYRNLTGGIVAIHSGYKY</sequence>
<accession>Q9PD92</accession>
<name>UBIE_XYLFA</name>
<proteinExistence type="inferred from homology"/>